<accession>P25657</accession>
<accession>D6VRA0</accession>
<sequence>MRSIFLLHFDYKTCEEEDFEDWNLADGKCLNGAKYMYKRRKQDARCLVKRTFKDMILHEIPCDSCTESDYECSSEFVRDAKGDCIPDYDQIALSDICDKANGETVSLEPLQLIKGDKCKKPMEIEAMNIPCEKILRESSNGKKIATIENKFDFEI</sequence>
<dbReference type="EMBL" id="X59720">
    <property type="protein sequence ID" value="CAA42241.1"/>
    <property type="molecule type" value="Genomic_DNA"/>
</dbReference>
<dbReference type="EMBL" id="AY692670">
    <property type="protein sequence ID" value="AAT92689.1"/>
    <property type="molecule type" value="Genomic_DNA"/>
</dbReference>
<dbReference type="EMBL" id="BK006937">
    <property type="protein sequence ID" value="DAA07569.1"/>
    <property type="molecule type" value="Genomic_DNA"/>
</dbReference>
<dbReference type="PIR" id="S19515">
    <property type="entry name" value="S19515"/>
</dbReference>
<dbReference type="RefSeq" id="NP_010023.1">
    <property type="nucleotide sequence ID" value="NM_001178806.1"/>
</dbReference>
<dbReference type="SMR" id="P25657"/>
<dbReference type="BioGRID" id="31072">
    <property type="interactions" value="34"/>
</dbReference>
<dbReference type="DIP" id="DIP-2043N"/>
<dbReference type="FunCoup" id="P25657">
    <property type="interactions" value="42"/>
</dbReference>
<dbReference type="IntAct" id="P25657">
    <property type="interactions" value="7"/>
</dbReference>
<dbReference type="MINT" id="P25657"/>
<dbReference type="STRING" id="4932.YCR099C"/>
<dbReference type="iPTMnet" id="P25657"/>
<dbReference type="PaxDb" id="4932-YCR099C"/>
<dbReference type="EnsemblFungi" id="YCR099C_mRNA">
    <property type="protein sequence ID" value="YCR099C"/>
    <property type="gene ID" value="YCR099C"/>
</dbReference>
<dbReference type="GeneID" id="850463"/>
<dbReference type="KEGG" id="sce:YCR099C"/>
<dbReference type="AGR" id="SGD:S000000696"/>
<dbReference type="SGD" id="S000000696">
    <property type="gene designation" value="YCR099C"/>
</dbReference>
<dbReference type="VEuPathDB" id="FungiDB:YCR099C"/>
<dbReference type="eggNOG" id="KOG3511">
    <property type="taxonomic scope" value="Eukaryota"/>
</dbReference>
<dbReference type="GeneTree" id="ENSGT01030000234563"/>
<dbReference type="HOGENOM" id="CLU_143022_0_0_1"/>
<dbReference type="InParanoid" id="P25657"/>
<dbReference type="OrthoDB" id="4038455at2759"/>
<dbReference type="BioCyc" id="YEAST:G3O-29393-MONOMER"/>
<dbReference type="BioGRID-ORCS" id="850463">
    <property type="hits" value="0 hits in 10 CRISPR screens"/>
</dbReference>
<dbReference type="PRO" id="PR:P25657"/>
<dbReference type="Proteomes" id="UP000002311">
    <property type="component" value="Chromosome III"/>
</dbReference>
<dbReference type="RNAct" id="P25657">
    <property type="molecule type" value="protein"/>
</dbReference>
<dbReference type="FunFam" id="3.30.60.270:FF:000008">
    <property type="entry name" value="Vacuolar protein sorting/targeting protein PEP1"/>
    <property type="match status" value="1"/>
</dbReference>
<dbReference type="Gene3D" id="2.10.70.80">
    <property type="match status" value="1"/>
</dbReference>
<dbReference type="Gene3D" id="3.30.60.270">
    <property type="match status" value="1"/>
</dbReference>
<dbReference type="InterPro" id="IPR031777">
    <property type="entry name" value="Sortilin_C"/>
</dbReference>
<dbReference type="InterPro" id="IPR050310">
    <property type="entry name" value="VPS10-sortilin"/>
</dbReference>
<dbReference type="PANTHER" id="PTHR12106">
    <property type="entry name" value="SORTILIN RELATED"/>
    <property type="match status" value="1"/>
</dbReference>
<dbReference type="PANTHER" id="PTHR12106:SF27">
    <property type="entry name" value="SORTILIN-RELATED RECEPTOR"/>
    <property type="match status" value="1"/>
</dbReference>
<dbReference type="Pfam" id="PF15901">
    <property type="entry name" value="Sortilin_C"/>
    <property type="match status" value="1"/>
</dbReference>
<reference key="1">
    <citation type="journal article" date="1992" name="Nature">
        <title>The complete DNA sequence of yeast chromosome III.</title>
        <authorList>
            <person name="Oliver S.G."/>
            <person name="van der Aart Q.J.M."/>
            <person name="Agostoni-Carbone M.L."/>
            <person name="Aigle M."/>
            <person name="Alberghina L."/>
            <person name="Alexandraki D."/>
            <person name="Antoine G."/>
            <person name="Anwar R."/>
            <person name="Ballesta J.P.G."/>
            <person name="Benit P."/>
            <person name="Berben G."/>
            <person name="Bergantino E."/>
            <person name="Biteau N."/>
            <person name="Bolle P.-A."/>
            <person name="Bolotin-Fukuhara M."/>
            <person name="Brown A."/>
            <person name="Brown A.J.P."/>
            <person name="Buhler J.-M."/>
            <person name="Carcano C."/>
            <person name="Carignani G."/>
            <person name="Cederberg H."/>
            <person name="Chanet R."/>
            <person name="Contreras R."/>
            <person name="Crouzet M."/>
            <person name="Daignan-Fornier B."/>
            <person name="Defoor E."/>
            <person name="Delgado M.D."/>
            <person name="Demolder J."/>
            <person name="Doira C."/>
            <person name="Dubois E."/>
            <person name="Dujon B."/>
            <person name="Duesterhoeft A."/>
            <person name="Erdmann D."/>
            <person name="Esteban M."/>
            <person name="Fabre F."/>
            <person name="Fairhead C."/>
            <person name="Faye G."/>
            <person name="Feldmann H."/>
            <person name="Fiers W."/>
            <person name="Francingues-Gaillard M.-C."/>
            <person name="Franco L."/>
            <person name="Frontali L."/>
            <person name="Fukuhara H."/>
            <person name="Fuller L.J."/>
            <person name="Galland P."/>
            <person name="Gent M.E."/>
            <person name="Gigot D."/>
            <person name="Gilliquet V."/>
            <person name="Glansdorff N."/>
            <person name="Goffeau A."/>
            <person name="Grenson M."/>
            <person name="Grisanti P."/>
            <person name="Grivell L.A."/>
            <person name="de Haan M."/>
            <person name="Haasemann M."/>
            <person name="Hatat D."/>
            <person name="Hoenicka J."/>
            <person name="Hegemann J.H."/>
            <person name="Herbert C.J."/>
            <person name="Hilger F."/>
            <person name="Hohmann S."/>
            <person name="Hollenberg C.P."/>
            <person name="Huse K."/>
            <person name="Iborra F."/>
            <person name="Indge K.J."/>
            <person name="Isono K."/>
            <person name="Jacq C."/>
            <person name="Jacquet M."/>
            <person name="James C.M."/>
            <person name="Jauniaux J.-C."/>
            <person name="Jia Y."/>
            <person name="Jimenez A."/>
            <person name="Kelly A."/>
            <person name="Kleinhans U."/>
            <person name="Kreisl P."/>
            <person name="Lanfranchi G."/>
            <person name="Lewis C."/>
            <person name="van der Linden C.G."/>
            <person name="Lucchini G."/>
            <person name="Lutzenkirchen K."/>
            <person name="Maat M.J."/>
            <person name="Mallet L."/>
            <person name="Mannhaupt G."/>
            <person name="Martegani E."/>
            <person name="Mathieu A."/>
            <person name="Maurer C.T.C."/>
            <person name="McConnell D."/>
            <person name="McKee R.A."/>
            <person name="Messenguy F."/>
            <person name="Mewes H.-W."/>
            <person name="Molemans F."/>
            <person name="Montague M.A."/>
            <person name="Muzi Falconi M."/>
            <person name="Navas L."/>
            <person name="Newlon C.S."/>
            <person name="Noone D."/>
            <person name="Pallier C."/>
            <person name="Panzeri L."/>
            <person name="Pearson B.M."/>
            <person name="Perea J."/>
            <person name="Philippsen P."/>
            <person name="Pierard A."/>
            <person name="Planta R.J."/>
            <person name="Plevani P."/>
            <person name="Poetsch B."/>
            <person name="Pohl F.M."/>
            <person name="Purnelle B."/>
            <person name="Ramezani Rad M."/>
            <person name="Rasmussen S.W."/>
            <person name="Raynal A."/>
            <person name="Remacha M.A."/>
            <person name="Richterich P."/>
            <person name="Roberts A.B."/>
            <person name="Rodriguez F."/>
            <person name="Sanz E."/>
            <person name="Schaaff-Gerstenschlaeger I."/>
            <person name="Scherens B."/>
            <person name="Schweitzer B."/>
            <person name="Shu Y."/>
            <person name="Skala J."/>
            <person name="Slonimski P.P."/>
            <person name="Sor F."/>
            <person name="Soustelle C."/>
            <person name="Spiegelberg R."/>
            <person name="Stateva L.I."/>
            <person name="Steensma H.Y."/>
            <person name="Steiner S."/>
            <person name="Thierry A."/>
            <person name="Thireos G."/>
            <person name="Tzermia M."/>
            <person name="Urrestarazu L.A."/>
            <person name="Valle G."/>
            <person name="Vetter I."/>
            <person name="van Vliet-Reedijk J.C."/>
            <person name="Voet M."/>
            <person name="Volckaert G."/>
            <person name="Vreken P."/>
            <person name="Wang H."/>
            <person name="Warmington J.R."/>
            <person name="von Wettstein D."/>
            <person name="Wicksteed B.L."/>
            <person name="Wilson C."/>
            <person name="Wurst H."/>
            <person name="Xu G."/>
            <person name="Yoshikawa A."/>
            <person name="Zimmermann F.K."/>
            <person name="Sgouros J.G."/>
        </authorList>
    </citation>
    <scope>NUCLEOTIDE SEQUENCE [LARGE SCALE GENOMIC DNA]</scope>
    <source>
        <strain>ATCC 204508 / S288c</strain>
    </source>
</reference>
<reference key="2">
    <citation type="journal article" date="2014" name="G3 (Bethesda)">
        <title>The reference genome sequence of Saccharomyces cerevisiae: Then and now.</title>
        <authorList>
            <person name="Engel S.R."/>
            <person name="Dietrich F.S."/>
            <person name="Fisk D.G."/>
            <person name="Binkley G."/>
            <person name="Balakrishnan R."/>
            <person name="Costanzo M.C."/>
            <person name="Dwight S.S."/>
            <person name="Hitz B.C."/>
            <person name="Karra K."/>
            <person name="Nash R.S."/>
            <person name="Weng S."/>
            <person name="Wong E.D."/>
            <person name="Lloyd P."/>
            <person name="Skrzypek M.S."/>
            <person name="Miyasato S.R."/>
            <person name="Simison M."/>
            <person name="Cherry J.M."/>
        </authorList>
    </citation>
    <scope>GENOME REANNOTATION</scope>
    <source>
        <strain>ATCC 204508 / S288c</strain>
    </source>
</reference>
<reference key="3">
    <citation type="journal article" date="2007" name="Genome Res.">
        <title>Approaching a complete repository of sequence-verified protein-encoding clones for Saccharomyces cerevisiae.</title>
        <authorList>
            <person name="Hu Y."/>
            <person name="Rolfs A."/>
            <person name="Bhullar B."/>
            <person name="Murthy T.V.S."/>
            <person name="Zhu C."/>
            <person name="Berger M.F."/>
            <person name="Camargo A.A."/>
            <person name="Kelley F."/>
            <person name="McCarron S."/>
            <person name="Jepson D."/>
            <person name="Richardson A."/>
            <person name="Raphael J."/>
            <person name="Moreira D."/>
            <person name="Taycher E."/>
            <person name="Zuo D."/>
            <person name="Mohr S."/>
            <person name="Kane M.F."/>
            <person name="Williamson J."/>
            <person name="Simpson A.J.G."/>
            <person name="Bulyk M.L."/>
            <person name="Harlow E."/>
            <person name="Marsischky G."/>
            <person name="Kolodner R.D."/>
            <person name="LaBaer J."/>
        </authorList>
    </citation>
    <scope>NUCLEOTIDE SEQUENCE [GENOMIC DNA]</scope>
    <source>
        <strain>ATCC 204508 / S288c</strain>
    </source>
</reference>
<protein>
    <recommendedName>
        <fullName>Uncharacterized protein YCR099C</fullName>
    </recommendedName>
</protein>
<proteinExistence type="predicted"/>
<name>YCY9_YEAST</name>
<organism>
    <name type="scientific">Saccharomyces cerevisiae (strain ATCC 204508 / S288c)</name>
    <name type="common">Baker's yeast</name>
    <dbReference type="NCBI Taxonomy" id="559292"/>
    <lineage>
        <taxon>Eukaryota</taxon>
        <taxon>Fungi</taxon>
        <taxon>Dikarya</taxon>
        <taxon>Ascomycota</taxon>
        <taxon>Saccharomycotina</taxon>
        <taxon>Saccharomycetes</taxon>
        <taxon>Saccharomycetales</taxon>
        <taxon>Saccharomycetaceae</taxon>
        <taxon>Saccharomyces</taxon>
    </lineage>
</organism>
<feature type="chain" id="PRO_0000202582" description="Uncharacterized protein YCR099C">
    <location>
        <begin position="1"/>
        <end position="155"/>
    </location>
</feature>
<keyword id="KW-1185">Reference proteome</keyword>
<gene>
    <name type="ordered locus">YCR099C</name>
    <name type="ORF">YCR99C</name>
</gene>